<reference key="1">
    <citation type="journal article" date="2006" name="J. Bacteriol.">
        <title>The Methanosarcina barkeri genome: comparative analysis with Methanosarcina acetivorans and Methanosarcina mazei reveals extensive rearrangement within methanosarcinal genomes.</title>
        <authorList>
            <person name="Maeder D.L."/>
            <person name="Anderson I."/>
            <person name="Brettin T.S."/>
            <person name="Bruce D.C."/>
            <person name="Gilna P."/>
            <person name="Han C.S."/>
            <person name="Lapidus A."/>
            <person name="Metcalf W.W."/>
            <person name="Saunders E."/>
            <person name="Tapia R."/>
            <person name="Sowers K.R."/>
        </authorList>
    </citation>
    <scope>NUCLEOTIDE SEQUENCE [LARGE SCALE GENOMIC DNA]</scope>
    <source>
        <strain>Fusaro / DSM 804</strain>
    </source>
</reference>
<reference key="2">
    <citation type="journal article" date="2003" name="J. Biol. Chem.">
        <title>A story of chelatase evolution: identification and characterization of a small 13-15-kDa 'ancestral' cobaltochelatase (CbiXS) in the archaea.</title>
        <authorList>
            <person name="Brindley A.A."/>
            <person name="Raux E."/>
            <person name="Leech H.K."/>
            <person name="Schubert H.L."/>
            <person name="Warren M.J."/>
        </authorList>
    </citation>
    <scope>FUNCTION AS A SIROHYDROCHLORIN COBALTOCHELATASE</scope>
    <scope>CATALYTIC ACTIVITY</scope>
    <scope>PATHWAY</scope>
    <scope>SUBUNIT</scope>
</reference>
<reference key="3">
    <citation type="journal article" date="2017" name="Nature">
        <title>Elucidation of the biosynthesis of the methane catalyst coenzyme F430.</title>
        <authorList>
            <person name="Moore S.J."/>
            <person name="Sowa S.T."/>
            <person name="Schuchardt C."/>
            <person name="Deery E."/>
            <person name="Lawrence A.D."/>
            <person name="Ramos J.V."/>
            <person name="Billig S."/>
            <person name="Birkemeyer C."/>
            <person name="Chivers P.T."/>
            <person name="Howard M.J."/>
            <person name="Rigby S.E."/>
            <person name="Layer G."/>
            <person name="Warren M.J."/>
        </authorList>
    </citation>
    <scope>FUNCTION AS A SIROHYDROCHLORIN NICKELCHELATASE</scope>
    <scope>CATALYTIC ACTIVITY</scope>
    <source>
        <strain>Fusaro / DSM 804</strain>
    </source>
</reference>
<organism>
    <name type="scientific">Methanosarcina barkeri (strain Fusaro / DSM 804)</name>
    <dbReference type="NCBI Taxonomy" id="269797"/>
    <lineage>
        <taxon>Archaea</taxon>
        <taxon>Methanobacteriati</taxon>
        <taxon>Methanobacteriota</taxon>
        <taxon>Stenosarchaea group</taxon>
        <taxon>Methanomicrobia</taxon>
        <taxon>Methanosarcinales</taxon>
        <taxon>Methanosarcinaceae</taxon>
        <taxon>Methanosarcina</taxon>
    </lineage>
</organism>
<gene>
    <name evidence="1 4" type="primary">cbiX</name>
    <name evidence="1 5" type="synonym">cfbA</name>
</gene>
<feature type="chain" id="PRO_0000150355" description="Sirohydrochlorin cobaltochelatase">
    <location>
        <begin position="1"/>
        <end position="130"/>
    </location>
</feature>
<feature type="active site" description="Proton acceptor" evidence="1">
    <location>
        <position position="12"/>
    </location>
</feature>
<feature type="binding site" evidence="1">
    <location>
        <position position="12"/>
    </location>
    <ligand>
        <name>Co(2+)</name>
        <dbReference type="ChEBI" id="CHEBI:48828"/>
    </ligand>
</feature>
<feature type="binding site" evidence="1">
    <location>
        <position position="12"/>
    </location>
    <ligand>
        <name>Ni(2+)</name>
        <dbReference type="ChEBI" id="CHEBI:49786"/>
    </ligand>
</feature>
<feature type="binding site" evidence="1">
    <location>
        <position position="48"/>
    </location>
    <ligand>
        <name>substrate</name>
    </ligand>
</feature>
<feature type="binding site" evidence="1">
    <location>
        <begin position="73"/>
        <end position="78"/>
    </location>
    <ligand>
        <name>substrate</name>
    </ligand>
</feature>
<feature type="binding site" evidence="1">
    <location>
        <position position="78"/>
    </location>
    <ligand>
        <name>Co(2+)</name>
        <dbReference type="ChEBI" id="CHEBI:48828"/>
    </ligand>
</feature>
<feature type="binding site" evidence="1">
    <location>
        <position position="78"/>
    </location>
    <ligand>
        <name>Ni(2+)</name>
        <dbReference type="ChEBI" id="CHEBI:49786"/>
    </ligand>
</feature>
<feature type="strand" evidence="7">
    <location>
        <begin position="91"/>
        <end position="93"/>
    </location>
</feature>
<feature type="strand" evidence="7">
    <location>
        <begin position="97"/>
        <end position="99"/>
    </location>
</feature>
<feature type="strand" evidence="7">
    <location>
        <begin position="102"/>
        <end position="104"/>
    </location>
</feature>
<sequence length="130" mass="13850">MTEKLGILAIGHGSKLPYNKEVVTQIADYIARKHSDVVVRAGFMENSEPTLGEAIEGFSGTGVTKIAAVPVFLASGVHITKDIPRILSLDENGCGTLEIDGKTVPLCYANPLGADELIADLVFKRVQEAL</sequence>
<dbReference type="EC" id="4.99.1.3" evidence="1 2"/>
<dbReference type="EC" id="4.99.1.11" evidence="1 3"/>
<dbReference type="EMBL" id="CP000099">
    <property type="protein sequence ID" value="AAZ69328.1"/>
    <property type="molecule type" value="Genomic_DNA"/>
</dbReference>
<dbReference type="PDB" id="6M2A">
    <property type="method" value="X-ray"/>
    <property type="resolution" value="2.23 A"/>
    <property type="chains" value="A/B=90-104"/>
</dbReference>
<dbReference type="PDBsum" id="6M2A"/>
<dbReference type="SMR" id="P61816"/>
<dbReference type="STRING" id="269797.Mbar_A0344"/>
<dbReference type="PaxDb" id="269797-Mbar_A0344"/>
<dbReference type="KEGG" id="mba:Mbar_A0344"/>
<dbReference type="eggNOG" id="arCOG02246">
    <property type="taxonomic scope" value="Archaea"/>
</dbReference>
<dbReference type="HOGENOM" id="CLU_065901_2_1_2"/>
<dbReference type="OrthoDB" id="11653at2157"/>
<dbReference type="BRENDA" id="4.99.1.3">
    <property type="organism ID" value="3250"/>
</dbReference>
<dbReference type="UniPathway" id="UPA00148">
    <property type="reaction ID" value="UER00223"/>
</dbReference>
<dbReference type="GO" id="GO:0050897">
    <property type="term" value="F:cobalt ion binding"/>
    <property type="evidence" value="ECO:0007669"/>
    <property type="project" value="UniProtKB-UniRule"/>
</dbReference>
<dbReference type="GO" id="GO:0016151">
    <property type="term" value="F:nickel cation binding"/>
    <property type="evidence" value="ECO:0007669"/>
    <property type="project" value="UniProtKB-UniRule"/>
</dbReference>
<dbReference type="GO" id="GO:0016852">
    <property type="term" value="F:sirohydrochlorin cobaltochelatase activity"/>
    <property type="evidence" value="ECO:0007669"/>
    <property type="project" value="UniProtKB-UniRule"/>
</dbReference>
<dbReference type="GO" id="GO:0019251">
    <property type="term" value="P:anaerobic cobalamin biosynthetic process"/>
    <property type="evidence" value="ECO:0007669"/>
    <property type="project" value="UniProtKB-UniRule"/>
</dbReference>
<dbReference type="GO" id="GO:0015948">
    <property type="term" value="P:methanogenesis"/>
    <property type="evidence" value="ECO:0007669"/>
    <property type="project" value="UniProtKB-KW"/>
</dbReference>
<dbReference type="CDD" id="cd03416">
    <property type="entry name" value="CbiX_SirB_N"/>
    <property type="match status" value="1"/>
</dbReference>
<dbReference type="Gene3D" id="3.40.50.1400">
    <property type="match status" value="1"/>
</dbReference>
<dbReference type="HAMAP" id="MF_00785">
    <property type="entry name" value="CbiX"/>
    <property type="match status" value="1"/>
</dbReference>
<dbReference type="InterPro" id="IPR002762">
    <property type="entry name" value="CbiX-like"/>
</dbReference>
<dbReference type="InterPro" id="IPR023652">
    <property type="entry name" value="SiroHydchlorin_Cochelatase"/>
</dbReference>
<dbReference type="InterPro" id="IPR050963">
    <property type="entry name" value="Sirohydro_Cobaltochel/CbiX"/>
</dbReference>
<dbReference type="NCBIfam" id="NF033198">
    <property type="entry name" value="F430_CfbA"/>
    <property type="match status" value="1"/>
</dbReference>
<dbReference type="NCBIfam" id="NF002090">
    <property type="entry name" value="PRK00923.1"/>
    <property type="match status" value="1"/>
</dbReference>
<dbReference type="PANTHER" id="PTHR33542">
    <property type="entry name" value="SIROHYDROCHLORIN FERROCHELATASE, CHLOROPLASTIC"/>
    <property type="match status" value="1"/>
</dbReference>
<dbReference type="PANTHER" id="PTHR33542:SF3">
    <property type="entry name" value="SIROHYDROCHLORIN FERROCHELATASE, CHLOROPLASTIC"/>
    <property type="match status" value="1"/>
</dbReference>
<dbReference type="Pfam" id="PF01903">
    <property type="entry name" value="CbiX"/>
    <property type="match status" value="1"/>
</dbReference>
<dbReference type="SUPFAM" id="SSF53800">
    <property type="entry name" value="Chelatase"/>
    <property type="match status" value="1"/>
</dbReference>
<name>CFBA_METBF</name>
<keyword id="KW-0002">3D-structure</keyword>
<keyword id="KW-0169">Cobalamin biosynthesis</keyword>
<keyword id="KW-0170">Cobalt</keyword>
<keyword id="KW-0456">Lyase</keyword>
<keyword id="KW-0479">Metal-binding</keyword>
<keyword id="KW-0484">Methanogenesis</keyword>
<keyword id="KW-0533">Nickel</keyword>
<accession>P61816</accession>
<accession>Q46FL4</accession>
<proteinExistence type="evidence at protein level"/>
<comment type="function">
    <text evidence="1 2 3">Catalyzes the insertion of Co(2+) into sirohydrochlorin as part of the anaerobic pathway to cobalamin biosynthesis (PubMed:12686546). Involved in the biosynthesis of the unique nickel-containing tetrapyrrole coenzyme F430, the prosthetic group of methyl-coenzyme M reductase (MCR), which plays a key role in methanogenesis and anaerobic methane oxidation (PubMed:28225763). Catalyzes the insertion of Ni(2+) into sirohydrochlorin to yield Ni-sirohydrochlorin (PubMed:28225763).</text>
</comment>
<comment type="catalytic activity">
    <reaction evidence="1 2">
        <text>Co-sirohydrochlorin + 2 H(+) = sirohydrochlorin + Co(2+)</text>
        <dbReference type="Rhea" id="RHEA:15893"/>
        <dbReference type="ChEBI" id="CHEBI:15378"/>
        <dbReference type="ChEBI" id="CHEBI:48828"/>
        <dbReference type="ChEBI" id="CHEBI:58351"/>
        <dbReference type="ChEBI" id="CHEBI:60049"/>
        <dbReference type="EC" id="4.99.1.3"/>
    </reaction>
</comment>
<comment type="catalytic activity">
    <reaction evidence="1 3">
        <text>Ni-sirohydrochlorin + 2 H(+) = sirohydrochlorin + Ni(2+)</text>
        <dbReference type="Rhea" id="RHEA:52796"/>
        <dbReference type="ChEBI" id="CHEBI:15378"/>
        <dbReference type="ChEBI" id="CHEBI:49786"/>
        <dbReference type="ChEBI" id="CHEBI:58351"/>
        <dbReference type="ChEBI" id="CHEBI:136841"/>
        <dbReference type="EC" id="4.99.1.11"/>
    </reaction>
</comment>
<comment type="pathway">
    <text evidence="1 2">Cofactor biosynthesis; adenosylcobalamin biosynthesis; cob(II)yrinate a,c-diamide from sirohydrochlorin (anaerobic route): step 1/10.</text>
</comment>
<comment type="subunit">
    <text evidence="1 6">Homotetramer; dimer of dimers.</text>
</comment>
<comment type="similarity">
    <text evidence="1">Belongs to the CbiX family. CbiXS subfamily.</text>
</comment>
<protein>
    <recommendedName>
        <fullName evidence="1 4">Sirohydrochlorin cobaltochelatase</fullName>
        <ecNumber evidence="1 2">4.99.1.3</ecNumber>
    </recommendedName>
    <alternativeName>
        <fullName evidence="1 4">CbiXS</fullName>
    </alternativeName>
    <alternativeName>
        <fullName evidence="1 5">Sirohydrochlorin nickelchelatase</fullName>
        <ecNumber evidence="1 3">4.99.1.11</ecNumber>
    </alternativeName>
</protein>
<evidence type="ECO:0000255" key="1">
    <source>
        <dbReference type="HAMAP-Rule" id="MF_00785"/>
    </source>
</evidence>
<evidence type="ECO:0000269" key="2">
    <source>
    </source>
</evidence>
<evidence type="ECO:0000269" key="3">
    <source>
    </source>
</evidence>
<evidence type="ECO:0000303" key="4">
    <source>
    </source>
</evidence>
<evidence type="ECO:0000303" key="5">
    <source>
    </source>
</evidence>
<evidence type="ECO:0000305" key="6">
    <source>
    </source>
</evidence>
<evidence type="ECO:0007829" key="7">
    <source>
        <dbReference type="PDB" id="6M2A"/>
    </source>
</evidence>